<accession>P46302</accession>
<proteinExistence type="inferred from homology"/>
<feature type="chain" id="PRO_0000136835" description="Small ribosomal subunit protein eS28">
    <location>
        <begin position="1"/>
        <end position="65"/>
    </location>
</feature>
<protein>
    <recommendedName>
        <fullName evidence="1">Small ribosomal subunit protein eS28</fullName>
    </recommendedName>
    <alternativeName>
        <fullName>40S ribosomal protein S28</fullName>
    </alternativeName>
</protein>
<comment type="subcellular location">
    <subcellularLocation>
        <location>Cytoplasm</location>
    </subcellularLocation>
</comment>
<comment type="similarity">
    <text evidence="1">Belongs to the eukaryotic ribosomal protein eS28 family.</text>
</comment>
<sequence length="65" mass="7411">MDTQVKLAVVVKVMGRTGSRGQVTQVRVKFLDDQNRLIMRNVKGPVCEGDILTLLESEREARRLR</sequence>
<dbReference type="EMBL" id="X82124">
    <property type="protein sequence ID" value="CAA57636.1"/>
    <property type="molecule type" value="mRNA"/>
</dbReference>
<dbReference type="PIR" id="S49035">
    <property type="entry name" value="S49035"/>
</dbReference>
<dbReference type="RefSeq" id="NP_001105548.1">
    <property type="nucleotide sequence ID" value="NM_001112078.1"/>
</dbReference>
<dbReference type="SMR" id="P46302"/>
<dbReference type="STRING" id="4577.P46302"/>
<dbReference type="PaxDb" id="4577-GRMZM2G030293_P01"/>
<dbReference type="MaizeGDB" id="82916"/>
<dbReference type="eggNOG" id="KOG3502">
    <property type="taxonomic scope" value="Eukaryota"/>
</dbReference>
<dbReference type="InParanoid" id="P46302"/>
<dbReference type="Proteomes" id="UP000007305">
    <property type="component" value="Unplaced"/>
</dbReference>
<dbReference type="ExpressionAtlas" id="P46302">
    <property type="expression patterns" value="baseline and differential"/>
</dbReference>
<dbReference type="GO" id="GO:0022627">
    <property type="term" value="C:cytosolic small ribosomal subunit"/>
    <property type="evidence" value="ECO:0000318"/>
    <property type="project" value="GO_Central"/>
</dbReference>
<dbReference type="GO" id="GO:0003735">
    <property type="term" value="F:structural constituent of ribosome"/>
    <property type="evidence" value="ECO:0000318"/>
    <property type="project" value="GO_Central"/>
</dbReference>
<dbReference type="GO" id="GO:0030490">
    <property type="term" value="P:maturation of SSU-rRNA"/>
    <property type="evidence" value="ECO:0000318"/>
    <property type="project" value="GO_Central"/>
</dbReference>
<dbReference type="GO" id="GO:0000028">
    <property type="term" value="P:ribosomal small subunit assembly"/>
    <property type="evidence" value="ECO:0000318"/>
    <property type="project" value="GO_Central"/>
</dbReference>
<dbReference type="GO" id="GO:0006412">
    <property type="term" value="P:translation"/>
    <property type="evidence" value="ECO:0007669"/>
    <property type="project" value="InterPro"/>
</dbReference>
<dbReference type="CDD" id="cd04457">
    <property type="entry name" value="S1_S28E"/>
    <property type="match status" value="1"/>
</dbReference>
<dbReference type="FunFam" id="2.40.50.140:FF:000025">
    <property type="entry name" value="40S ribosomal protein S28"/>
    <property type="match status" value="1"/>
</dbReference>
<dbReference type="Gene3D" id="2.40.50.140">
    <property type="entry name" value="Nucleic acid-binding proteins"/>
    <property type="match status" value="1"/>
</dbReference>
<dbReference type="HAMAP" id="MF_00292">
    <property type="entry name" value="Ribosomal_eS28"/>
    <property type="match status" value="1"/>
</dbReference>
<dbReference type="InterPro" id="IPR012340">
    <property type="entry name" value="NA-bd_OB-fold"/>
</dbReference>
<dbReference type="InterPro" id="IPR000289">
    <property type="entry name" value="Ribosomal_eS28"/>
</dbReference>
<dbReference type="InterPro" id="IPR028626">
    <property type="entry name" value="Ribosomal_eS28_CS"/>
</dbReference>
<dbReference type="PANTHER" id="PTHR10769">
    <property type="entry name" value="40S RIBOSOMAL PROTEIN S28"/>
    <property type="match status" value="1"/>
</dbReference>
<dbReference type="PANTHER" id="PTHR10769:SF10">
    <property type="entry name" value="SMALL RIBOSOMAL SUBUNIT PROTEIN ES28"/>
    <property type="match status" value="1"/>
</dbReference>
<dbReference type="Pfam" id="PF01200">
    <property type="entry name" value="Ribosomal_S28e"/>
    <property type="match status" value="1"/>
</dbReference>
<dbReference type="SUPFAM" id="SSF50249">
    <property type="entry name" value="Nucleic acid-binding proteins"/>
    <property type="match status" value="1"/>
</dbReference>
<dbReference type="PROSITE" id="PS00961">
    <property type="entry name" value="RIBOSOMAL_S28E"/>
    <property type="match status" value="1"/>
</dbReference>
<keyword id="KW-0963">Cytoplasm</keyword>
<keyword id="KW-1185">Reference proteome</keyword>
<keyword id="KW-0687">Ribonucleoprotein</keyword>
<keyword id="KW-0689">Ribosomal protein</keyword>
<gene>
    <name type="primary">RPS28</name>
</gene>
<name>RS28_MAIZE</name>
<evidence type="ECO:0000305" key="1"/>
<reference key="1">
    <citation type="submission" date="1994-10" db="EMBL/GenBank/DDBJ databases">
        <authorList>
            <person name="Chevalier C."/>
            <person name="le Querrec F."/>
            <person name="Raymond P."/>
        </authorList>
    </citation>
    <scope>NUCLEOTIDE SEQUENCE [MRNA]</scope>
    <source>
        <strain>cv. DEA</strain>
        <tissue>Root meristem</tissue>
    </source>
</reference>
<organism>
    <name type="scientific">Zea mays</name>
    <name type="common">Maize</name>
    <dbReference type="NCBI Taxonomy" id="4577"/>
    <lineage>
        <taxon>Eukaryota</taxon>
        <taxon>Viridiplantae</taxon>
        <taxon>Streptophyta</taxon>
        <taxon>Embryophyta</taxon>
        <taxon>Tracheophyta</taxon>
        <taxon>Spermatophyta</taxon>
        <taxon>Magnoliopsida</taxon>
        <taxon>Liliopsida</taxon>
        <taxon>Poales</taxon>
        <taxon>Poaceae</taxon>
        <taxon>PACMAD clade</taxon>
        <taxon>Panicoideae</taxon>
        <taxon>Andropogonodae</taxon>
        <taxon>Andropogoneae</taxon>
        <taxon>Tripsacinae</taxon>
        <taxon>Zea</taxon>
    </lineage>
</organism>